<comment type="function">
    <text evidence="1">Catalyzes a salvage reaction resulting in the formation of AMP, that is energically less costly than de novo synthesis.</text>
</comment>
<comment type="catalytic activity">
    <reaction evidence="1">
        <text>AMP + diphosphate = 5-phospho-alpha-D-ribose 1-diphosphate + adenine</text>
        <dbReference type="Rhea" id="RHEA:16609"/>
        <dbReference type="ChEBI" id="CHEBI:16708"/>
        <dbReference type="ChEBI" id="CHEBI:33019"/>
        <dbReference type="ChEBI" id="CHEBI:58017"/>
        <dbReference type="ChEBI" id="CHEBI:456215"/>
        <dbReference type="EC" id="2.4.2.7"/>
    </reaction>
</comment>
<comment type="pathway">
    <text evidence="1">Purine metabolism; AMP biosynthesis via salvage pathway; AMP from adenine: step 1/1.</text>
</comment>
<comment type="subunit">
    <text evidence="1">Homodimer.</text>
</comment>
<comment type="subcellular location">
    <subcellularLocation>
        <location evidence="1">Cytoplasm</location>
    </subcellularLocation>
</comment>
<comment type="similarity">
    <text evidence="1">Belongs to the purine/pyrimidine phosphoribosyltransferase family.</text>
</comment>
<comment type="sequence caution" evidence="2">
    <conflict type="erroneous initiation">
        <sequence resource="EMBL-CDS" id="ABI25476"/>
    </conflict>
</comment>
<evidence type="ECO:0000255" key="1">
    <source>
        <dbReference type="HAMAP-Rule" id="MF_00004"/>
    </source>
</evidence>
<evidence type="ECO:0000305" key="2"/>
<dbReference type="EC" id="2.4.2.7" evidence="1"/>
<dbReference type="EMBL" id="CP000436">
    <property type="protein sequence ID" value="ABI25476.1"/>
    <property type="status" value="ALT_INIT"/>
    <property type="molecule type" value="Genomic_DNA"/>
</dbReference>
<dbReference type="SMR" id="Q0I3U5"/>
<dbReference type="KEGG" id="hso:HS_1201"/>
<dbReference type="eggNOG" id="COG0503">
    <property type="taxonomic scope" value="Bacteria"/>
</dbReference>
<dbReference type="HOGENOM" id="CLU_063339_3_0_6"/>
<dbReference type="UniPathway" id="UPA00588">
    <property type="reaction ID" value="UER00646"/>
</dbReference>
<dbReference type="GO" id="GO:0005829">
    <property type="term" value="C:cytosol"/>
    <property type="evidence" value="ECO:0007669"/>
    <property type="project" value="TreeGrafter"/>
</dbReference>
<dbReference type="GO" id="GO:0003999">
    <property type="term" value="F:adenine phosphoribosyltransferase activity"/>
    <property type="evidence" value="ECO:0007669"/>
    <property type="project" value="UniProtKB-UniRule"/>
</dbReference>
<dbReference type="GO" id="GO:0006168">
    <property type="term" value="P:adenine salvage"/>
    <property type="evidence" value="ECO:0007669"/>
    <property type="project" value="InterPro"/>
</dbReference>
<dbReference type="GO" id="GO:0044209">
    <property type="term" value="P:AMP salvage"/>
    <property type="evidence" value="ECO:0007669"/>
    <property type="project" value="UniProtKB-UniRule"/>
</dbReference>
<dbReference type="GO" id="GO:0006166">
    <property type="term" value="P:purine ribonucleoside salvage"/>
    <property type="evidence" value="ECO:0007669"/>
    <property type="project" value="UniProtKB-KW"/>
</dbReference>
<dbReference type="CDD" id="cd06223">
    <property type="entry name" value="PRTases_typeI"/>
    <property type="match status" value="1"/>
</dbReference>
<dbReference type="FunFam" id="3.40.50.2020:FF:000004">
    <property type="entry name" value="Adenine phosphoribosyltransferase"/>
    <property type="match status" value="1"/>
</dbReference>
<dbReference type="Gene3D" id="3.40.50.2020">
    <property type="match status" value="1"/>
</dbReference>
<dbReference type="HAMAP" id="MF_00004">
    <property type="entry name" value="Aden_phosphoribosyltr"/>
    <property type="match status" value="1"/>
</dbReference>
<dbReference type="InterPro" id="IPR005764">
    <property type="entry name" value="Ade_phspho_trans"/>
</dbReference>
<dbReference type="InterPro" id="IPR050120">
    <property type="entry name" value="Adenine_PRTase"/>
</dbReference>
<dbReference type="InterPro" id="IPR000836">
    <property type="entry name" value="PRibTrfase_dom"/>
</dbReference>
<dbReference type="InterPro" id="IPR029057">
    <property type="entry name" value="PRTase-like"/>
</dbReference>
<dbReference type="NCBIfam" id="TIGR01090">
    <property type="entry name" value="apt"/>
    <property type="match status" value="1"/>
</dbReference>
<dbReference type="NCBIfam" id="NF002632">
    <property type="entry name" value="PRK02304.1-1"/>
    <property type="match status" value="1"/>
</dbReference>
<dbReference type="NCBIfam" id="NF002634">
    <property type="entry name" value="PRK02304.1-3"/>
    <property type="match status" value="1"/>
</dbReference>
<dbReference type="NCBIfam" id="NF002636">
    <property type="entry name" value="PRK02304.1-5"/>
    <property type="match status" value="1"/>
</dbReference>
<dbReference type="PANTHER" id="PTHR11776">
    <property type="entry name" value="ADENINE PHOSPHORIBOSYLTRANSFERASE"/>
    <property type="match status" value="1"/>
</dbReference>
<dbReference type="PANTHER" id="PTHR11776:SF7">
    <property type="entry name" value="PHOSPHORIBOSYLTRANSFERASE DOMAIN-CONTAINING PROTEIN"/>
    <property type="match status" value="1"/>
</dbReference>
<dbReference type="Pfam" id="PF00156">
    <property type="entry name" value="Pribosyltran"/>
    <property type="match status" value="1"/>
</dbReference>
<dbReference type="SUPFAM" id="SSF53271">
    <property type="entry name" value="PRTase-like"/>
    <property type="match status" value="1"/>
</dbReference>
<dbReference type="PROSITE" id="PS00103">
    <property type="entry name" value="PUR_PYR_PR_TRANSFER"/>
    <property type="match status" value="1"/>
</dbReference>
<sequence length="179" mass="19620">MNKLELIKSSIKSIPNHPKEGIIFRDITSLTEVPEAFQATIDLIIERYKSKGITKVIGTESRGFIFGAPVALALNVPFILVRKPGKLPRETIAQSYQLEYGQDTLEMHVSSIQAGDNVLVIDDLLATGGTIEATVKLVERLQGQVKHAAFVISLPDLGGEVRLRELGVEPFTLVEFSGH</sequence>
<gene>
    <name evidence="1" type="primary">apt</name>
    <name type="ordered locus">HS_1201</name>
</gene>
<organism>
    <name type="scientific">Histophilus somni (strain 129Pt)</name>
    <name type="common">Haemophilus somnus</name>
    <dbReference type="NCBI Taxonomy" id="205914"/>
    <lineage>
        <taxon>Bacteria</taxon>
        <taxon>Pseudomonadati</taxon>
        <taxon>Pseudomonadota</taxon>
        <taxon>Gammaproteobacteria</taxon>
        <taxon>Pasteurellales</taxon>
        <taxon>Pasteurellaceae</taxon>
        <taxon>Histophilus</taxon>
    </lineage>
</organism>
<name>APT_HISS1</name>
<keyword id="KW-0963">Cytoplasm</keyword>
<keyword id="KW-0328">Glycosyltransferase</keyword>
<keyword id="KW-0660">Purine salvage</keyword>
<keyword id="KW-0808">Transferase</keyword>
<feature type="chain" id="PRO_0000329348" description="Adenine phosphoribosyltransferase">
    <location>
        <begin position="1"/>
        <end position="179"/>
    </location>
</feature>
<reference key="1">
    <citation type="journal article" date="2007" name="J. Bacteriol.">
        <title>Complete genome sequence of Haemophilus somnus (Histophilus somni) strain 129Pt and comparison to Haemophilus ducreyi 35000HP and Haemophilus influenzae Rd.</title>
        <authorList>
            <person name="Challacombe J.F."/>
            <person name="Duncan A.J."/>
            <person name="Brettin T.S."/>
            <person name="Bruce D."/>
            <person name="Chertkov O."/>
            <person name="Detter J.C."/>
            <person name="Han C.S."/>
            <person name="Misra M."/>
            <person name="Richardson P."/>
            <person name="Tapia R."/>
            <person name="Thayer N."/>
            <person name="Xie G."/>
            <person name="Inzana T.J."/>
        </authorList>
    </citation>
    <scope>NUCLEOTIDE SEQUENCE [LARGE SCALE GENOMIC DNA]</scope>
    <source>
        <strain>129Pt</strain>
    </source>
</reference>
<protein>
    <recommendedName>
        <fullName evidence="1">Adenine phosphoribosyltransferase</fullName>
        <shortName evidence="1">APRT</shortName>
        <ecNumber evidence="1">2.4.2.7</ecNumber>
    </recommendedName>
</protein>
<accession>Q0I3U5</accession>
<proteinExistence type="inferred from homology"/>